<organism>
    <name type="scientific">Homo sapiens</name>
    <name type="common">Human</name>
    <dbReference type="NCBI Taxonomy" id="9606"/>
    <lineage>
        <taxon>Eukaryota</taxon>
        <taxon>Metazoa</taxon>
        <taxon>Chordata</taxon>
        <taxon>Craniata</taxon>
        <taxon>Vertebrata</taxon>
        <taxon>Euteleostomi</taxon>
        <taxon>Mammalia</taxon>
        <taxon>Eutheria</taxon>
        <taxon>Euarchontoglires</taxon>
        <taxon>Primates</taxon>
        <taxon>Haplorrhini</taxon>
        <taxon>Catarrhini</taxon>
        <taxon>Hominidae</taxon>
        <taxon>Homo</taxon>
    </lineage>
</organism>
<reference key="1">
    <citation type="journal article" date="1997" name="Genomics">
        <title>Identification of two novel human putative serine/threonine kinases, VRK1 and VRK2, with structural similarity to Vaccinia virus B1R kinase.</title>
        <authorList>
            <person name="Nezu J."/>
            <person name="Oku A."/>
            <person name="Jones M.H."/>
            <person name="Shimane M."/>
        </authorList>
    </citation>
    <scope>NUCLEOTIDE SEQUENCE [MRNA]</scope>
    <scope>TISSUE SPECIFICITY</scope>
    <source>
        <tissue>Fetal liver</tissue>
    </source>
</reference>
<reference key="2">
    <citation type="journal article" date="2004" name="Genome Res.">
        <title>The status, quality, and expansion of the NIH full-length cDNA project: the Mammalian Gene Collection (MGC).</title>
        <authorList>
            <consortium name="The MGC Project Team"/>
        </authorList>
    </citation>
    <scope>NUCLEOTIDE SEQUENCE [LARGE SCALE MRNA]</scope>
    <source>
        <tissue>Brain</tissue>
        <tissue>Lung</tissue>
    </source>
</reference>
<reference key="3">
    <citation type="journal article" date="2000" name="Oncogene">
        <title>The human vaccinia-related kinase 1 (VRK1) phosphorylates threonine-18 within the mdm-2 binding site of the p53 tumour suppressor protein.</title>
        <authorList>
            <person name="Lopez-Borges S."/>
            <person name="Lazo P.A."/>
        </authorList>
    </citation>
    <scope>FUNCTION</scope>
    <scope>SUBCELLULAR LOCATION</scope>
    <scope>AUTOPHOSPHORYLATION</scope>
    <scope>MUTAGENESIS OF SER-14; THR-102; SER-125; SER-150; SER-158; SER-239; THR-305; THR-312; THR-355 AND THR-390</scope>
</reference>
<reference key="4">
    <citation type="journal article" date="2002" name="Arch. Biochem. Biophys.">
        <title>Kinetic properties of p53 phosphorylation by the human vaccinia-related kinase 1.</title>
        <authorList>
            <person name="Barcia R."/>
            <person name="Lopez-Borges S."/>
            <person name="Vega F.M."/>
            <person name="Lazo P.A."/>
        </authorList>
    </citation>
    <scope>PHOSPHORYLATION AT THR-355</scope>
    <scope>ACTIVITY REGULATION</scope>
</reference>
<reference key="5">
    <citation type="journal article" date="2004" name="J. Biol. Chem.">
        <title>Characterization of three paralogous members of the Mammalian vaccinia related kinase family.</title>
        <authorList>
            <person name="Nichols R.J."/>
            <person name="Traktman P."/>
        </authorList>
    </citation>
    <scope>FUNCTION</scope>
    <scope>SUBCELLULAR LOCATION</scope>
    <scope>PHOSPHORYLATION</scope>
</reference>
<reference key="6">
    <citation type="journal article" date="2004" name="J. Biol. Chem.">
        <title>Human vaccinia-related kinase 1 (VRK1) activates the ATF2 transcriptional activity by novel phosphorylation on Thr-73 and Ser-62 and cooperates with JNK.</title>
        <authorList>
            <person name="Sevilla A."/>
            <person name="Santos C.R."/>
            <person name="Vega F.M."/>
            <person name="Lazo P.A."/>
        </authorList>
    </citation>
    <scope>FUNCTION</scope>
    <scope>SUBCELLULAR LOCATION</scope>
</reference>
<reference key="7">
    <citation type="journal article" date="2006" name="FEBS J.">
        <title>The subcellular localization of vaccinia-related kinase-2 (VRK2) isoforms determines their different effect on p53 stability in tumour cell lines.</title>
        <authorList>
            <person name="Blanco S."/>
            <person name="Klimcakova L."/>
            <person name="Vega F.M."/>
            <person name="Lazo P.A."/>
        </authorList>
    </citation>
    <scope>SUBCELLULAR LOCATION</scope>
</reference>
<reference key="8">
    <citation type="journal article" date="2006" name="Mol. Biol. Cell">
        <title>The vaccinia-related kinases phosphorylate the N' terminus of BAF, regulating its interaction with DNA and its retention in the nucleus.</title>
        <authorList>
            <person name="Nichols R.J."/>
            <person name="Wiebe M.S."/>
            <person name="Traktman P."/>
        </authorList>
    </citation>
    <scope>FUNCTION</scope>
</reference>
<reference key="9">
    <citation type="journal article" date="2008" name="Mol. Cell. Proteomics">
        <title>Proteomics identification of nuclear Ran GTPase as an inhibitor of human VRK1 and VRK2 (vaccinia-related kinase) activities.</title>
        <authorList>
            <person name="Sanz-Garcia M."/>
            <person name="Lopez-Sanchez I."/>
            <person name="Lazo P.A."/>
        </authorList>
    </citation>
    <scope>FUNCTION</scope>
    <scope>SUBCELLULAR LOCATION</scope>
    <scope>INTERACTION WITH RAN</scope>
    <scope>ACTIVITY REGULATION</scope>
</reference>
<reference key="10">
    <citation type="journal article" date="2009" name="Mol. Cell. Biol.">
        <title>Plk3 interacts with and specifically phosphorylates VRK1 in Ser342, a downstream target in a pathway that induces Golgi fragmentation.</title>
        <authorList>
            <person name="Lopez-Sanchez I."/>
            <person name="Sanz-Garcia M."/>
            <person name="Lazo P.A."/>
        </authorList>
    </citation>
    <scope>FUNCTION</scope>
    <scope>PHOSPHORYLATION AT SER-342</scope>
    <scope>MUTAGENESIS OF LYS-179 AND SER-342</scope>
</reference>
<reference key="11">
    <citation type="journal article" date="2010" name="Sci. Signal.">
        <title>Quantitative phosphoproteomics reveals widespread full phosphorylation site occupancy during mitosis.</title>
        <authorList>
            <person name="Olsen J.V."/>
            <person name="Vermeulen M."/>
            <person name="Santamaria A."/>
            <person name="Kumar C."/>
            <person name="Miller M.L."/>
            <person name="Jensen L.J."/>
            <person name="Gnad F."/>
            <person name="Cox J."/>
            <person name="Jensen T.S."/>
            <person name="Nigg E.A."/>
            <person name="Brunak S."/>
            <person name="Mann M."/>
        </authorList>
    </citation>
    <scope>PHOSPHORYLATION [LARGE SCALE ANALYSIS] AT SER-342</scope>
    <scope>IDENTIFICATION BY MASS SPECTROMETRY [LARGE SCALE ANALYSIS]</scope>
    <source>
        <tissue>Cervix carcinoma</tissue>
    </source>
</reference>
<reference key="12">
    <citation type="journal article" date="2011" name="BMC Syst. Biol.">
        <title>Initial characterization of the human central proteome.</title>
        <authorList>
            <person name="Burkard T.R."/>
            <person name="Planyavsky M."/>
            <person name="Kaupe I."/>
            <person name="Breitwieser F.P."/>
            <person name="Buerckstuemmer T."/>
            <person name="Bennett K.L."/>
            <person name="Superti-Furga G."/>
            <person name="Colinge J."/>
        </authorList>
    </citation>
    <scope>IDENTIFICATION BY MASS SPECTROMETRY [LARGE SCALE ANALYSIS]</scope>
</reference>
<reference key="13">
    <citation type="journal article" date="2013" name="J. Proteome Res.">
        <title>Toward a comprehensive characterization of a human cancer cell phosphoproteome.</title>
        <authorList>
            <person name="Zhou H."/>
            <person name="Di Palma S."/>
            <person name="Preisinger C."/>
            <person name="Peng M."/>
            <person name="Polat A.N."/>
            <person name="Heck A.J."/>
            <person name="Mohammed S."/>
        </authorList>
    </citation>
    <scope>PHOSPHORYLATION [LARGE SCALE ANALYSIS] AT SER-342; SER-376 AND THR-378</scope>
    <scope>IDENTIFICATION BY MASS SPECTROMETRY [LARGE SCALE ANALYSIS]</scope>
    <source>
        <tissue>Erythroleukemia</tissue>
    </source>
</reference>
<reference key="14">
    <citation type="journal article" date="2014" name="J. Proteomics">
        <title>An enzyme assisted RP-RPLC approach for in-depth analysis of human liver phosphoproteome.</title>
        <authorList>
            <person name="Bian Y."/>
            <person name="Song C."/>
            <person name="Cheng K."/>
            <person name="Dong M."/>
            <person name="Wang F."/>
            <person name="Huang J."/>
            <person name="Sun D."/>
            <person name="Wang L."/>
            <person name="Ye M."/>
            <person name="Zou H."/>
        </authorList>
    </citation>
    <scope>IDENTIFICATION BY MASS SPECTROMETRY [LARGE SCALE ANALYSIS]</scope>
    <source>
        <tissue>Liver</tissue>
    </source>
</reference>
<reference key="15">
    <citation type="journal article" date="2017" name="Nat. Struct. Mol. Biol.">
        <title>Site-specific mapping of the human SUMO proteome reveals co-modification with phosphorylation.</title>
        <authorList>
            <person name="Hendriks I.A."/>
            <person name="Lyon D."/>
            <person name="Young C."/>
            <person name="Jensen L.J."/>
            <person name="Vertegaal A.C."/>
            <person name="Nielsen M.L."/>
        </authorList>
    </citation>
    <scope>SUMOYLATION [LARGE SCALE ANALYSIS] AT LYS-71</scope>
    <scope>IDENTIFICATION BY MASS SPECTROMETRY [LARGE SCALE ANALYSIS]</scope>
</reference>
<reference key="16">
    <citation type="journal article" date="2020" name="Cancers">
        <title>VRK1 phosphorylates Tip60/KAT5 and is required for H4K16 acetylation in response to DNA Damage.</title>
        <authorList>
            <person name="Garcia-Gonzalez R."/>
            <person name="Morejon-Garcia P."/>
            <person name="Campillo-Marcos I."/>
            <person name="Salzano M."/>
            <person name="Lazo P.A."/>
        </authorList>
    </citation>
    <scope>FUNCTION</scope>
</reference>
<reference key="17">
    <citation type="journal article" date="2021" name="J. Virol.">
        <title>The Vaccinia Virus B12 Pseudokinase Represses Viral Replication via Interaction with the Cellular Kinase VRK1 and Activation of the Antiviral Effector BAF.</title>
        <authorList>
            <person name="Rico A.B."/>
            <person name="Linville A.C."/>
            <person name="Olson A.T."/>
            <person name="Wang Z."/>
            <person name="Wiebe M.S."/>
        </authorList>
    </citation>
    <scope>INTERACTION WITH VACCINIA VIRUS PROTEIN B12 (MICROBIAL INFECTION)</scope>
</reference>
<reference key="18">
    <citation type="journal article" date="2023" name="Epigenetics Chromatin">
        <title>The pattern of histone H3 epigenetic posttranslational modifications is regulated by the VRK1 chromatin kinase.</title>
        <authorList>
            <person name="Monte-Serrano E."/>
            <person name="Morejon-Garcia P."/>
            <person name="Campillo-Marcos I."/>
            <person name="Campos-Diaz A."/>
            <person name="Navarro-Carrasco E."/>
            <person name="Lazo P.A."/>
        </authorList>
    </citation>
    <scope>FUNCTION</scope>
    <scope>INTERACTION WITH HDAC1; KAT2B; SETDB1; KDM3A AND KDM4A</scope>
</reference>
<reference key="19">
    <citation type="submission" date="2010-09" db="PDB data bank">
        <title>Human vaccinia-related kinase 1.</title>
        <authorList>
            <consortium name="Structural genomics consortium (SGC)"/>
        </authorList>
    </citation>
    <scope>X-RAY CRYSTALLOGRAPHY (2.4 ANGSTROMS) OF 3-364 IN COMPLEX WITH INHIBITOR</scope>
</reference>
<reference key="20">
    <citation type="journal article" date="2011" name="J. Biol. Chem.">
        <title>NMR solution structure of human vaccinia-related kinase 1 (VRK1) reveals the C-terminal tail essential for its structural stability and autocatalytic activity.</title>
        <authorList>
            <person name="Shin J."/>
            <person name="Chakraborty G."/>
            <person name="Bharatham N."/>
            <person name="Kang C."/>
            <person name="Tochio N."/>
            <person name="Koshiba S."/>
            <person name="Kigawa T."/>
            <person name="Kim W."/>
            <person name="Kim K.T."/>
            <person name="Yoon H.S."/>
        </authorList>
    </citation>
    <scope>STRUCTURE BY NMR</scope>
    <scope>CATALYTIC ACTIVITY</scope>
    <scope>MUTAGENESIS OF SER-342 AND THR-353</scope>
    <scope>AUTOPHOSPHORYLATION</scope>
</reference>
<reference evidence="37" key="21">
    <citation type="journal article" date="2022" name="Nucleic Acids Res.">
        <title>Multivalent DNA and nucleosome acidic patch interactions specify VRK1 mitotic localization and activity.</title>
        <authorList>
            <person name="Budziszewski G.R."/>
            <person name="Zhao Y."/>
            <person name="Spangler C.J."/>
            <person name="Kedziora K.M."/>
            <person name="Williams M.R."/>
            <person name="Azzam D.N."/>
            <person name="Skrajna A."/>
            <person name="Koyama Y."/>
            <person name="Cesmat A.P."/>
            <person name="Simmons H.C."/>
            <person name="Arteaga E.C."/>
            <person name="Strauss J.D."/>
            <person name="Kireev D."/>
            <person name="McGinty R.K."/>
        </authorList>
    </citation>
    <scope>STRUCTURE BY ELECTRON MICROSCOPY (3.00 ANGSTROMS) IN COMPLEX WITH NUCLEOSOME CORE</scope>
    <scope>INTERACTION WITH H2A AND H2B</scope>
    <scope>SUBCELLULAR LOCATION</scope>
    <scope>REGION</scope>
    <scope>MUTAGENESIS OF 387-ARG--ARG-393</scope>
    <scope>CHARACTERIZATION OF VARIANTS HMNR10 375-TRP--LYS-396 DEL AND HIS-387</scope>
</reference>
<reference key="22">
    <citation type="journal article" date="2009" name="Am. J. Hum. Genet.">
        <title>Spinal muscular atrophy with pontocerebellar hypoplasia is caused by a mutation in the VRK1 gene.</title>
        <authorList>
            <person name="Renbaum P."/>
            <person name="Kellerman E."/>
            <person name="Jaron R."/>
            <person name="Geiger D."/>
            <person name="Segel R."/>
            <person name="Lee M."/>
            <person name="King M.C."/>
            <person name="Levy-Lahad E."/>
        </authorList>
    </citation>
    <scope>VARIANT PCH1A 358-ARG--LYS-396 DEL</scope>
    <scope>INVOLVEMENT IN PCH1A</scope>
</reference>
<reference key="23">
    <citation type="journal article" date="2011" name="J. Proteomics">
        <title>Substrate profiling of human vaccinia-related kinases identifies coilin, a Cajal body nuclear protein, as a phosphorylation target with neurological implications.</title>
        <authorList>
            <person name="Sanz-Garcia M."/>
            <person name="Vazquez-Cedeira M."/>
            <person name="Kellerman E."/>
            <person name="Renbaum P."/>
            <person name="Levy-Lahad E."/>
            <person name="Lazo P.A."/>
        </authorList>
    </citation>
    <scope>CHARACTERIZATION OF VARIANT PCH1A 358-ARG--LYS-396 DEL</scope>
    <scope>FUNCTION</scope>
    <scope>SUBCELLULAR LOCATION</scope>
</reference>
<reference key="24">
    <citation type="journal article" date="2011" name="Nature">
        <title>Deep sequencing reveals 50 novel genes for recessive cognitive disorders.</title>
        <authorList>
            <person name="Najmabadi H."/>
            <person name="Hu H."/>
            <person name="Garshasbi M."/>
            <person name="Zemojtel T."/>
            <person name="Abedini S.S."/>
            <person name="Chen W."/>
            <person name="Hosseini M."/>
            <person name="Behjati F."/>
            <person name="Haas S."/>
            <person name="Jamali P."/>
            <person name="Zecha A."/>
            <person name="Mohseni M."/>
            <person name="Puettmann L."/>
            <person name="Vahid L.N."/>
            <person name="Jensen C."/>
            <person name="Moheb L.A."/>
            <person name="Bienek M."/>
            <person name="Larti F."/>
            <person name="Mueller I."/>
            <person name="Weissmann R."/>
            <person name="Darvish H."/>
            <person name="Wrogemann K."/>
            <person name="Hadavi V."/>
            <person name="Lipkowitz B."/>
            <person name="Esmaeeli-Nieh S."/>
            <person name="Wieczorek D."/>
            <person name="Kariminejad R."/>
            <person name="Firouzabadi S.G."/>
            <person name="Cohen M."/>
            <person name="Fattahi Z."/>
            <person name="Rost I."/>
            <person name="Mojahedi F."/>
            <person name="Hertzberg C."/>
            <person name="Dehghan A."/>
            <person name="Rajab A."/>
            <person name="Banavandi M.J."/>
            <person name="Hoffer J."/>
            <person name="Falah M."/>
            <person name="Musante L."/>
            <person name="Kalscheuer V."/>
            <person name="Ullmann R."/>
            <person name="Kuss A.W."/>
            <person name="Tzschach A."/>
            <person name="Kahrizi K."/>
            <person name="Ropers H.H."/>
        </authorList>
    </citation>
    <scope>VARIANT PCH1A CYS-133</scope>
    <scope>INVOLVEMENT IN PCH1A</scope>
</reference>
<reference key="25">
    <citation type="journal article" date="2013" name="JAMA Neurol.">
        <title>Mutations in VRK1 associated with complex motor and sensory axonal neuropathy plus microcephaly.</title>
        <authorList>
            <person name="Gonzaga-Jauregui C."/>
            <person name="Lotze T."/>
            <person name="Jamal L."/>
            <person name="Penney S."/>
            <person name="Campbell I.M."/>
            <person name="Pehlivan D."/>
            <person name="Hunter J.V."/>
            <person name="Woodbury S.L."/>
            <person name="Raymond G."/>
            <person name="Adesina A.M."/>
            <person name="Jhangiani S.N."/>
            <person name="Reid J.G."/>
            <person name="Muzny D.M."/>
            <person name="Boerwinkle E."/>
            <person name="Lupski J.R."/>
            <person name="Gibbs R.A."/>
            <person name="Wiszniewski W."/>
        </authorList>
    </citation>
    <scope>VARIANTS HMNR10 GLN-89; MET-236 AND 358-ARG--LYS-396 DEL</scope>
    <scope>INVOLVEMENT IN HMNR10</scope>
</reference>
<reference key="26">
    <citation type="journal article" date="2015" name="J. Clin. Neuromuscul. Dis.">
        <title>Expanding Phenotype of VRK1 Mutations in Motor Neuron Disease.</title>
        <authorList>
            <person name="Nguyen T.P."/>
            <person name="Biliciler S."/>
            <person name="Wiszniewski W."/>
            <person name="Sheikh K."/>
        </authorList>
    </citation>
    <scope>VARIANTS HMNR10 ARG-119 AND CYS-321</scope>
    <scope>INVOLVEMENT IN HMNR10</scope>
</reference>
<reference key="27">
    <citation type="journal article" date="2015" name="J. Neurosci.">
        <title>The spinal muscular atrophy with pontocerebellar hypoplasia gene VRK1 regulates neuronal migration through an amyloid-beta precursor protein-dependent mechanism.</title>
        <authorList>
            <person name="Vinograd-Byk H."/>
            <person name="Sapir T."/>
            <person name="Cantarero L."/>
            <person name="Lazo P.A."/>
            <person name="Zeligson S."/>
            <person name="Lev D."/>
            <person name="Lerman-Sagie T."/>
            <person name="Renbaum P."/>
            <person name="Reiner O."/>
            <person name="Levy-Lahad E."/>
        </authorList>
    </citation>
    <scope>CHARACTERIZATION OF VARIANT PCH1A 358-ARG--LYS-396 DEL</scope>
</reference>
<reference key="28">
    <citation type="journal article" date="2016" name="Neurology">
        <title>Novel motor phenotypes in patients with VRK1 mutations without pontocerebellar hypoplasia.</title>
        <authorList>
            <person name="Stoll M."/>
            <person name="Teoh H."/>
            <person name="Lee J."/>
            <person name="Reddel S."/>
            <person name="Zhu Y."/>
            <person name="Buckley M."/>
            <person name="Sampaio H."/>
            <person name="Roscioli T."/>
            <person name="Farrar M."/>
            <person name="Nicholson G."/>
        </authorList>
    </citation>
    <scope>VARIANTS HMNR10 ARG-119; ARG-135; VAL-195 AND 358-ARG--LYS-396 DEL</scope>
    <scope>INVOLVEMENT IN HMNR10</scope>
</reference>
<reference key="29">
    <citation type="journal article" date="2019" name="Ann. Clin. Transl. Neurol.">
        <title>A novel VRK1 mutation associated with recessive distal hereditary motor neuropathy.</title>
        <authorList>
            <person name="Feng S.Y."/>
            <person name="Li L.Y."/>
            <person name="Feng S.M."/>
            <person name="Zou Z.Y."/>
        </authorList>
    </citation>
    <scope>VARIANT HMNR10 375-TRP--LYS-396 DEL</scope>
    <scope>INVOLVEMENT IN HMNR10</scope>
</reference>
<reference key="30">
    <citation type="journal article" date="2019" name="Hum. Mol. Genet.">
        <title>Loss of Cajal bodies in motor neurons from patients with novel mutations in VRK1.</title>
        <authorList>
            <person name="El-Bazzal L."/>
            <person name="Rihan K."/>
            <person name="Bernard-Marissal N."/>
            <person name="Castro C."/>
            <person name="Chouery-Khoury E."/>
            <person name="Desvignes J.P."/>
            <person name="Atkinson A."/>
            <person name="Bertaux K."/>
            <person name="Koussa S."/>
            <person name="Levy N."/>
            <person name="Bartoli M."/>
            <person name="Megarbane A."/>
            <person name="Jabbour R."/>
            <person name="Delague V."/>
        </authorList>
    </citation>
    <scope>VARIANTS HMNR10 ILE-219 AND LEU-254</scope>
    <scope>INVOLVEMENT IN HMNR10</scope>
    <scope>SUBCELLULAR LOCATION</scope>
    <scope>FUNCTION</scope>
</reference>
<reference key="31">
    <citation type="journal article" date="2019" name="J. Hum. Genet.">
        <title>A novel mutation in VRK1 associated with distal spinal muscular atrophy.</title>
        <authorList>
            <person name="Li N."/>
            <person name="Wang L."/>
            <person name="Sun X."/>
            <person name="Lu Z."/>
            <person name="Suo X."/>
            <person name="Li J."/>
            <person name="Peng J."/>
            <person name="Peng R."/>
        </authorList>
    </citation>
    <scope>VARIANT HMNR10 375-TRP--LYS-396 DEL</scope>
</reference>
<reference key="32">
    <citation type="journal article" date="2019" name="Sci. Rep.">
        <title>VRK1 functional insufficiency due to alterations in protein stability or kinase activity of human VRK1 pathogenic variants implicated in neuromotor syndromes.</title>
        <authorList>
            <person name="Martin-Doncel E."/>
            <person name="Rojas A.M."/>
            <person name="Cantarero L."/>
            <person name="Lazo P.A."/>
        </authorList>
    </citation>
    <scope>CHARACTERIZATION OF VARIANTS HMNR10 GLN-89; ARG-119; ARG-135; VAL-195; MET-236 AND CYS-321</scope>
    <scope>CHARACTERIZATION OF VARIANTS PCH1A CYS-133 AND 358-ARG--LYS-396 DEL</scope>
    <scope>FUNCTION</scope>
</reference>
<reference key="33">
    <citation type="journal article" date="2020" name="Ann. Clin. Transl. Neurol.">
        <title>VRK1 (Y213H) homozygous mutant impairs Cajal bodies in a hereditary case of distal motor neuropathy.</title>
        <authorList>
            <person name="Marcos A.T."/>
            <person name="Martin-Doncel E."/>
            <person name="Morejon-Garcia P."/>
            <person name="Marcos-Alcalde I."/>
            <person name="Gomez-Puertas P."/>
            <person name="Segura-Puimedon M."/>
            <person name="Armengol L."/>
            <person name="Navarro-Pando J.M."/>
            <person name="Lazo P.A."/>
        </authorList>
    </citation>
    <scope>VARIANT HIS-213</scope>
    <scope>CHARACTERIZATION OF VARIANT HIS-213</scope>
    <scope>MUTAGENESIS OF LYS-179</scope>
</reference>
<reference key="34">
    <citation type="journal article" date="2020" name="Eur. J. Neurol.">
        <title>Molecular analysis and clinical diversity of distal hereditary motor neuropathy.</title>
        <authorList>
            <person name="Liu X."/>
            <person name="Duan X."/>
            <person name="Zhang Y."/>
            <person name="Sun A."/>
            <person name="Fan D."/>
        </authorList>
    </citation>
    <scope>VARIANTS HMNR10 375-TRP--LYS-396 DEL AND HIS-387</scope>
</reference>
<reference key="35">
    <citation type="journal article" date="2020" name="Muscle Nerve">
        <title>Identification of a homozygous VRK1 mutation in two patients with adult-onset distal hereditary motor neuropathy.</title>
        <authorList>
            <person name="Greenbaum L."/>
            <person name="Barel O."/>
            <person name="Nikitin V."/>
            <person name="Hersalis-Eldar A."/>
            <person name="Kol N."/>
            <person name="Reznik-Wolf H."/>
            <person name="Dominissini D."/>
            <person name="Pras E."/>
            <person name="Dori A."/>
        </authorList>
    </citation>
    <scope>VARIANT HMNR10 HIS-387</scope>
    <scope>INVOLVEMENT IN HMNR10</scope>
</reference>
<reference key="36">
    <citation type="journal article" date="2021" name="Neurol. Genet.">
        <title>Dysfunctional Homozygous VRK1-D263G Variant Impairs the Assembly of Cajal Bodies and DNA Damage Response in Hereditary Spastic Paraplegia.</title>
        <authorList>
            <person name="Morejon-Garcia P."/>
            <person name="Keren B."/>
            <person name="Marcos-Alcalde I."/>
            <person name="Gomez-Puertas P."/>
            <person name="Mochel F."/>
            <person name="Lazo P.A."/>
        </authorList>
    </citation>
    <scope>VARIANT GLY-263</scope>
    <scope>CHARACTERIZATION OF VARIANT GLY-263</scope>
    <scope>MUTAGENESIS OF LYS-179</scope>
</reference>
<protein>
    <recommendedName>
        <fullName evidence="35">Serine/threonine-protein kinase VRK1</fullName>
        <ecNumber evidence="14">2.7.11.1</ecNumber>
    </recommendedName>
    <alternativeName>
        <fullName evidence="34">Vaccinia-related kinase 1</fullName>
    </alternativeName>
</protein>
<accession>Q99986</accession>
<accession>Q3SYL2</accession>
<proteinExistence type="evidence at protein level"/>
<gene>
    <name evidence="34 36" type="primary">VRK1</name>
</gene>
<comment type="function">
    <text evidence="1 5 7 8 9 11 12 15 23 24 28 32">Serine/threonine kinase involved in the regulation of key cellular processes including the cell cycle, nuclear condensation, transcription regulation, and DNA damage response (PubMed:14645249, PubMed:18617507, PubMed:19103756, PubMed:33076429). Controls chromatin organization and remodeling by mediating phosphorylation of histone H3 on 'Thr-4' and histone H2AX (H2aXT4ph) (PubMed:31527692, PubMed:37179361). It also phosphorylates KAT5 in response to DNA damage, promoting KAT5 association with chromatin and histone acetyltransferase activity (PubMed:33076429). Is involved in the regulation of cell cycle progression of neural progenitors, and is required for proper cortical neuronal migration (By similarity). Is involved in neurite elongation and branching in motor neurons, and has an essential role in Cajal bodies assembly, acting through COIL phosphorylation and the control of coilin degradation (PubMed:21920476, PubMed:31090908, PubMed:31527692). Involved in Golgi disassembly during the cell cycle: following phosphorylation by PLK3 during mitosis, it is required to induce Golgi fragmentation (PubMed:19103756). Phosphorylates BANF1: disrupts its ability to bind DNA, reduces its binding to LEM domain-containing proteins and causes its relocalization from the nucleus to the cytoplasm (PubMed:16495336). Phosphorylates TP53BP1 and p53/TP53 on 'Thr-18', preventing the interaction between p53/TP53 and MDM2 (PubMed:10951572, PubMed:31527692). Phosphorylates ATF2 which activates its transcriptional activity (PubMed:15105425). Phosphorylates JUN (PubMed:31527692).</text>
</comment>
<comment type="catalytic activity">
    <reaction evidence="14">
        <text>L-seryl-[protein] + ATP = O-phospho-L-seryl-[protein] + ADP + H(+)</text>
        <dbReference type="Rhea" id="RHEA:17989"/>
        <dbReference type="Rhea" id="RHEA-COMP:9863"/>
        <dbReference type="Rhea" id="RHEA-COMP:11604"/>
        <dbReference type="ChEBI" id="CHEBI:15378"/>
        <dbReference type="ChEBI" id="CHEBI:29999"/>
        <dbReference type="ChEBI" id="CHEBI:30616"/>
        <dbReference type="ChEBI" id="CHEBI:83421"/>
        <dbReference type="ChEBI" id="CHEBI:456216"/>
        <dbReference type="EC" id="2.7.11.1"/>
    </reaction>
</comment>
<comment type="catalytic activity">
    <reaction evidence="14">
        <text>L-threonyl-[protein] + ATP = O-phospho-L-threonyl-[protein] + ADP + H(+)</text>
        <dbReference type="Rhea" id="RHEA:46608"/>
        <dbReference type="Rhea" id="RHEA-COMP:11060"/>
        <dbReference type="Rhea" id="RHEA-COMP:11605"/>
        <dbReference type="ChEBI" id="CHEBI:15378"/>
        <dbReference type="ChEBI" id="CHEBI:30013"/>
        <dbReference type="ChEBI" id="CHEBI:30616"/>
        <dbReference type="ChEBI" id="CHEBI:61977"/>
        <dbReference type="ChEBI" id="CHEBI:456216"/>
        <dbReference type="EC" id="2.7.11.1"/>
    </reaction>
</comment>
<comment type="activity regulation">
    <text evidence="6 11">Active in presence of Mn(2+), Mg(2+) and Zn(2+), but is not functional with Ca(2+) or Cu(2+) (PubMed:11883897). Has a higher affinity for Mn(2+) than for Mg(2+) (PubMed:11883897). RAN inhibits its autophosphorylation and its ability to phosphorylate histone H3 (PubMed:18617507).</text>
</comment>
<comment type="subunit">
    <text evidence="31 32">Interacts with HDAC1, KAT2B, SETDB1, KDM3A and KDM4A (PubMed:37179361). Associates with the nucleosome through interactions with nucleosome DNA, histone H2A and histone H2B; the interaction with H2A and H2B is mediated by the nucleosome acidic patch, a cluster of negatively charged residues of H2A and H2B forming a cleft within the nucleosome core (PubMed:35390161).</text>
</comment>
<comment type="subunit">
    <text evidence="29">(Microbial infection) Interacts with vaccinia protein B12; this interaction inhibits the repressive activity of the vaccinia virus B12 pseudokinase on viral replication factory formation.</text>
</comment>
<comment type="interaction">
    <interactant intactId="EBI-1769146">
        <id>Q99986</id>
    </interactant>
    <interactant intactId="EBI-1170906">
        <id>P15336</id>
        <label>ATF2</label>
    </interactant>
    <organismsDiffer>false</organismsDiffer>
    <experiments>5</experiments>
</comment>
<comment type="interaction">
    <interactant intactId="EBI-1769146">
        <id>Q99986</id>
    </interactant>
    <interactant intactId="EBI-624291">
        <id>Q96GD4</id>
        <label>AURKB</label>
    </interactant>
    <organismsDiffer>false</organismsDiffer>
    <experiments>14</experiments>
</comment>
<comment type="interaction">
    <interactant intactId="EBI-1769146">
        <id>Q99986</id>
    </interactant>
    <interactant intactId="EBI-945751">
        <id>P38432</id>
        <label>COIL</label>
    </interactant>
    <organismsDiffer>false</organismsDiffer>
    <experiments>9</experiments>
</comment>
<comment type="interaction">
    <interactant intactId="EBI-1769146">
        <id>Q99986</id>
    </interactant>
    <interactant intactId="EBI-494830">
        <id>P16104</id>
        <label>H2AX</label>
    </interactant>
    <organismsDiffer>false</organismsDiffer>
    <experiments>3</experiments>
</comment>
<comment type="interaction">
    <interactant intactId="EBI-1769146">
        <id>Q99986</id>
    </interactant>
    <interactant intactId="EBI-852823">
        <id>P05412</id>
        <label>JUN</label>
    </interactant>
    <organismsDiffer>false</organismsDiffer>
    <experiments>5</experiments>
</comment>
<comment type="interaction">
    <interactant intactId="EBI-1769146">
        <id>Q99986</id>
    </interactant>
    <interactant intactId="EBI-399080">
        <id>Q92993</id>
        <label>KAT5</label>
    </interactant>
    <organismsDiffer>false</organismsDiffer>
    <experiments>6</experiments>
</comment>
<comment type="interaction">
    <interactant intactId="EBI-1769146">
        <id>Q99986</id>
    </interactant>
    <interactant intactId="EBI-494844">
        <id>O60934</id>
        <label>NBN</label>
    </interactant>
    <organismsDiffer>false</organismsDiffer>
    <experiments>13</experiments>
</comment>
<comment type="interaction">
    <interactant intactId="EBI-1769146">
        <id>Q99986</id>
    </interactant>
    <interactant intactId="EBI-751877">
        <id>Q9H4B4</id>
        <label>PLK3</label>
    </interactant>
    <organismsDiffer>false</organismsDiffer>
    <experiments>12</experiments>
</comment>
<comment type="interaction">
    <interactant intactId="EBI-1769146">
        <id>Q99986</id>
    </interactant>
    <interactant intactId="EBI-286642">
        <id>P62826</id>
        <label>RAN</label>
    </interactant>
    <organismsDiffer>false</organismsDiffer>
    <experiments>12</experiments>
</comment>
<comment type="interaction">
    <interactant intactId="EBI-1769146">
        <id>Q99986</id>
    </interactant>
    <interactant intactId="EBI-373337">
        <id>O76064</id>
        <label>RNF8</label>
    </interactant>
    <organismsDiffer>false</organismsDiffer>
    <experiments>2</experiments>
</comment>
<comment type="interaction">
    <interactant intactId="EBI-1769146">
        <id>Q99986</id>
    </interactant>
    <interactant intactId="EBI-6124081">
        <id>P48431</id>
        <label>SOX2</label>
    </interactant>
    <organismsDiffer>false</organismsDiffer>
    <experiments>14</experiments>
</comment>
<comment type="interaction">
    <interactant intactId="EBI-1769146">
        <id>Q99986</id>
    </interactant>
    <interactant intactId="EBI-366083">
        <id>P04637</id>
        <label>TP53</label>
    </interactant>
    <organismsDiffer>false</organismsDiffer>
    <experiments>11</experiments>
</comment>
<comment type="interaction">
    <interactant intactId="EBI-1769146">
        <id>Q99986</id>
    </interactant>
    <interactant intactId="EBI-396540">
        <id>Q12888</id>
        <label>TP53BP1</label>
    </interactant>
    <organismsDiffer>false</organismsDiffer>
    <experiments>8</experiments>
</comment>
<comment type="subcellular location">
    <subcellularLocation>
        <location evidence="5 7 8 10 11 23">Nucleus</location>
    </subcellularLocation>
    <subcellularLocation>
        <location evidence="11 23">Cytoplasm</location>
    </subcellularLocation>
    <subcellularLocation>
        <location evidence="15">Nucleus</location>
        <location evidence="15">Cajal body</location>
    </subcellularLocation>
    <text evidence="31">Enriched on chromatin during mitosis.</text>
</comment>
<comment type="tissue specificity">
    <text evidence="33">Widely expressed. Highly expressed in fetal liver, testis and thymus.</text>
</comment>
<comment type="PTM">
    <text evidence="6 7 12 14">Autophosphorylated at various serine and threonine residues (PubMed:11883897, PubMed:14645249, PubMed:19103756, PubMed:21543316). Autophosphorylation does not impair its ability to phosphorylate p53/TP53 (PubMed:11883897). Phosphorylation by PLK3 leads to induction of Golgi fragmentation during mitosis (PubMed:19103756).</text>
</comment>
<comment type="disease" evidence="13 15 16 18 24">
    <disease id="DI-02626">
        <name>Pontocerebellar hypoplasia 1A</name>
        <acronym>PCH1A</acronym>
        <description>A form of pontocerebellar hypoplasia, a disorder characterized by structural defects of the pons and cerebellum, evident upon brain imaging. PCH1A is an autosomal recessive form characterized by an abnormally small cerebellum and brainstem, central and peripheral motor dysfunction from birth, gliosis and spinal cord anterior horn cells degeneration resembling infantile spinal muscular atrophy. Additional features include muscle hypotonia, congenital contractures and respiratory insufficiency that is evident at birth.</description>
        <dbReference type="MIM" id="607596"/>
    </disease>
    <text>The disease is caused by variants affecting the gene represented in this entry.</text>
</comment>
<comment type="disease" evidence="17 19 20 21 22 23 24 25 26 31">
    <disease id="DI-06778">
        <name>Neuronopathy, distal hereditary motor, autosomal recessive 10</name>
        <acronym>HMNR10</acronym>
        <description>A form of distal hereditary motor neuronopathy, a heterogeneous group of neuromuscular diseases caused by selective degeneration of motor neurons in the anterior horn of the spinal cord, without sensory deficit in the posterior horn. HMNR10 is a slowly progressive form characterized by distal muscle weakness and atrophy predominantly affecting the lower limbs, and resulting in gait abnormalities. Upper limb involvement is seen in some patients. HMNR10 has mostly juvenile or adult onset, although symptoms may manifest in infancy or childhood in some patients.</description>
        <dbReference type="MIM" id="620542"/>
    </disease>
    <text>The disease is caused by variants affecting the gene represented in this entry.</text>
</comment>
<comment type="similarity">
    <text evidence="35">Belongs to the protein kinase superfamily. CK1 Ser/Thr protein kinase family. VRK subfamily.</text>
</comment>
<comment type="online information" name="Atlas of Genetics and Cytogenetics in Oncology and Haematology">
    <link uri="https://atlasgeneticsoncology.org/gene/43556/VRK1"/>
</comment>
<sequence>MPRVKAAQAGRQSSAKRHLAEQFAVGEIITDMAKKEWKVGLPIGQGGFGCIYLADMNSSESVGSDAPCVVKVEPSDNGPLFTELKFYQRAAKPEQIQKWIRTRKLKYLGVPKYWGSGLHDKNGKSYRFMIMDRFGSDLQKIYEANAKRFSRKTVLQLSLRILDILEYIHEHEYVHGDIKASNLLLNYKNPDQVYLVDYGLAYRYCPEGVHKEYKEDPKRCHDGTIEFTSIDAHNGVAPSRRGDLEILGYCMIQWLTGHLPWEDNLKDPKYVRDSKIRYRENIASLMDKCFPEKNKPGEIAKYMETVKLLDYTEKPLYENLRDILLQGLKAIGSKDDGKLDLSVVENGGLKAKTITKKRKKEIEESKEPGVEDTEWSNTQTEEAIQTRSRTRKRVQK</sequence>
<evidence type="ECO:0000250" key="1">
    <source>
        <dbReference type="UniProtKB" id="Q80X41"/>
    </source>
</evidence>
<evidence type="ECO:0000255" key="2">
    <source>
        <dbReference type="PROSITE-ProRule" id="PRU00159"/>
    </source>
</evidence>
<evidence type="ECO:0000255" key="3">
    <source>
        <dbReference type="PROSITE-ProRule" id="PRU10027"/>
    </source>
</evidence>
<evidence type="ECO:0000256" key="4">
    <source>
        <dbReference type="SAM" id="MobiDB-lite"/>
    </source>
</evidence>
<evidence type="ECO:0000269" key="5">
    <source>
    </source>
</evidence>
<evidence type="ECO:0000269" key="6">
    <source>
    </source>
</evidence>
<evidence type="ECO:0000269" key="7">
    <source>
    </source>
</evidence>
<evidence type="ECO:0000269" key="8">
    <source>
    </source>
</evidence>
<evidence type="ECO:0000269" key="9">
    <source>
    </source>
</evidence>
<evidence type="ECO:0000269" key="10">
    <source>
    </source>
</evidence>
<evidence type="ECO:0000269" key="11">
    <source>
    </source>
</evidence>
<evidence type="ECO:0000269" key="12">
    <source>
    </source>
</evidence>
<evidence type="ECO:0000269" key="13">
    <source>
    </source>
</evidence>
<evidence type="ECO:0000269" key="14">
    <source>
    </source>
</evidence>
<evidence type="ECO:0000269" key="15">
    <source>
    </source>
</evidence>
<evidence type="ECO:0000269" key="16">
    <source>
    </source>
</evidence>
<evidence type="ECO:0000269" key="17">
    <source>
    </source>
</evidence>
<evidence type="ECO:0000269" key="18">
    <source>
    </source>
</evidence>
<evidence type="ECO:0000269" key="19">
    <source>
    </source>
</evidence>
<evidence type="ECO:0000269" key="20">
    <source>
    </source>
</evidence>
<evidence type="ECO:0000269" key="21">
    <source>
    </source>
</evidence>
<evidence type="ECO:0000269" key="22">
    <source>
    </source>
</evidence>
<evidence type="ECO:0000269" key="23">
    <source>
    </source>
</evidence>
<evidence type="ECO:0000269" key="24">
    <source>
    </source>
</evidence>
<evidence type="ECO:0000269" key="25">
    <source>
    </source>
</evidence>
<evidence type="ECO:0000269" key="26">
    <source>
    </source>
</evidence>
<evidence type="ECO:0000269" key="27">
    <source>
    </source>
</evidence>
<evidence type="ECO:0000269" key="28">
    <source>
    </source>
</evidence>
<evidence type="ECO:0000269" key="29">
    <source>
    </source>
</evidence>
<evidence type="ECO:0000269" key="30">
    <source>
    </source>
</evidence>
<evidence type="ECO:0000269" key="31">
    <source>
    </source>
</evidence>
<evidence type="ECO:0000269" key="32">
    <source>
    </source>
</evidence>
<evidence type="ECO:0000269" key="33">
    <source>
    </source>
</evidence>
<evidence type="ECO:0000303" key="34">
    <source>
    </source>
</evidence>
<evidence type="ECO:0000305" key="35"/>
<evidence type="ECO:0000312" key="36">
    <source>
        <dbReference type="HGNC" id="HGNC:12718"/>
    </source>
</evidence>
<evidence type="ECO:0007744" key="37">
    <source>
        <dbReference type="PDB" id="7TAN"/>
    </source>
</evidence>
<evidence type="ECO:0007744" key="38">
    <source>
    </source>
</evidence>
<evidence type="ECO:0007744" key="39">
    <source>
    </source>
</evidence>
<evidence type="ECO:0007744" key="40">
    <source>
    </source>
</evidence>
<evidence type="ECO:0007829" key="41">
    <source>
        <dbReference type="PDB" id="2KTY"/>
    </source>
</evidence>
<evidence type="ECO:0007829" key="42">
    <source>
        <dbReference type="PDB" id="2KUL"/>
    </source>
</evidence>
<evidence type="ECO:0007829" key="43">
    <source>
        <dbReference type="PDB" id="2LAV"/>
    </source>
</evidence>
<evidence type="ECO:0007829" key="44">
    <source>
        <dbReference type="PDB" id="5UKF"/>
    </source>
</evidence>
<evidence type="ECO:0007829" key="45">
    <source>
        <dbReference type="PDB" id="6BRU"/>
    </source>
</evidence>
<evidence type="ECO:0007829" key="46">
    <source>
        <dbReference type="PDB" id="6BTW"/>
    </source>
</evidence>
<evidence type="ECO:0007829" key="47">
    <source>
        <dbReference type="PDB" id="6VXU"/>
    </source>
</evidence>
<evidence type="ECO:0007829" key="48">
    <source>
        <dbReference type="PDB" id="6VZH"/>
    </source>
</evidence>
<name>VRK1_HUMAN</name>
<feature type="chain" id="PRO_0000086803" description="Serine/threonine-protein kinase VRK1">
    <location>
        <begin position="1"/>
        <end position="396"/>
    </location>
</feature>
<feature type="domain" description="Protein kinase" evidence="2">
    <location>
        <begin position="37"/>
        <end position="317"/>
    </location>
</feature>
<feature type="region of interest" description="Disordered" evidence="4">
    <location>
        <begin position="354"/>
        <end position="396"/>
    </location>
</feature>
<feature type="region of interest" description="Required for interaction with the nucleosome" evidence="31">
    <location>
        <begin position="387"/>
        <end position="393"/>
    </location>
</feature>
<feature type="compositionally biased region" description="Basic and acidic residues" evidence="4">
    <location>
        <begin position="360"/>
        <end position="369"/>
    </location>
</feature>
<feature type="compositionally biased region" description="Polar residues" evidence="4">
    <location>
        <begin position="375"/>
        <end position="387"/>
    </location>
</feature>
<feature type="active site" description="Proton acceptor" evidence="2 3">
    <location>
        <position position="177"/>
    </location>
</feature>
<feature type="binding site" evidence="2">
    <location>
        <begin position="43"/>
        <end position="51"/>
    </location>
    <ligand>
        <name>ATP</name>
        <dbReference type="ChEBI" id="CHEBI:30616"/>
    </ligand>
</feature>
<feature type="binding site" evidence="2">
    <location>
        <position position="71"/>
    </location>
    <ligand>
        <name>ATP</name>
        <dbReference type="ChEBI" id="CHEBI:30616"/>
    </ligand>
</feature>
<feature type="modified residue" description="Phosphoserine; by PLK3" evidence="12 38 39">
    <location>
        <position position="342"/>
    </location>
</feature>
<feature type="modified residue" description="Phosphothreonine; by autocatalysis" evidence="6">
    <location>
        <position position="355"/>
    </location>
</feature>
<feature type="modified residue" description="Phosphoserine" evidence="39">
    <location>
        <position position="376"/>
    </location>
</feature>
<feature type="modified residue" description="Phosphothreonine" evidence="39">
    <location>
        <position position="378"/>
    </location>
</feature>
<feature type="cross-link" description="Glycyl lysine isopeptide (Lys-Gly) (interchain with G-Cter in SUMO2)" evidence="40">
    <location>
        <position position="71"/>
    </location>
</feature>
<feature type="sequence variant" id="VAR_089102" description="In HMNR10; uncertain significance; increased kinase activity resulting in increased autophosphorylation and phosphorylation of COIL, H3, H2AX, TP53, JUN and TP53BP1; does not affect protein stability; dbSNP:rs773138218." evidence="17 24">
    <original>R</original>
    <variation>Q</variation>
    <location>
        <position position="89"/>
    </location>
</feature>
<feature type="sequence variant" id="VAR_089103" description="In HMNR10; likely pathogenic; severely reduced kinase activity resulting in severely decreased autophosphorylation and phosphorylation of COIL, H3, H2AX, TP53, JUN and TP53BP1; does not affect protein stability; dbSNP:rs371295780." evidence="19 20 24">
    <original>H</original>
    <variation>R</variation>
    <location>
        <position position="119"/>
    </location>
</feature>
<feature type="sequence variant" id="VAR_089104" description="In PCH1A; likely pathogenic; severely reduced kinase activity resulting in severely decreased autophosphorylation and phosphorylation of COIL, H3, H2AX, TP53, JUN and TP53BP1; reduced protein stability; dbSNP:rs387906830." evidence="16 24">
    <original>R</original>
    <variation>C</variation>
    <location>
        <position position="133"/>
    </location>
</feature>
<feature type="sequence variant" id="VAR_089105" description="In HMNR10; likely pathogenic; severely reduced kinase activity resulting in severely decreased autophosphorylation and phosphorylation of COIL, H3, H2AX, TP53, JUN and TP53BP1; reduced protein stability; the orthologous mouse mutation results in defective Cajal bodies assembly; loss of function in DNA damage response." evidence="20 24">
    <original>G</original>
    <variation>R</variation>
    <location>
        <position position="135"/>
    </location>
</feature>
<feature type="sequence variant" id="VAR_089106" description="In HMNR10; uncertain significance; increased kinase activity resulting in increased autophosphorylation and phosphorylation of COIL, H3, H2AX, TP53, JUN and TP53BP1; reduced protein stability; dbSNP:rs779770049." evidence="20 24">
    <original>L</original>
    <variation>V</variation>
    <location>
        <position position="195"/>
    </location>
</feature>
<feature type="sequence variant" id="VAR_089107" description="Found in a patient with distal sensory and motor neuropathy; likely pathogenic; severely reduced kinase activity resulting in severely decreased phosphorylation of COIL, H3, H2AX, TP53 and TP53BP1; the orthologous mouse mutation results in impaired Cajal bodies assembly." evidence="27">
    <original>Y</original>
    <variation>H</variation>
    <location>
        <position position="213"/>
    </location>
</feature>
<feature type="sequence variant" id="VAR_089108" description="In HMNR10; uncertain significance." evidence="23">
    <original>R</original>
    <variation>I</variation>
    <location>
        <position position="219"/>
    </location>
</feature>
<feature type="sequence variant" id="VAR_089109" description="In HMNR10; likely pathogenic; severely reduced kinase activity resulting in severely decreased autophosphorylation and phosphorylation of COIL, H3, H2AX, TP53, JUN and TP53BP1; does not affect protein stability; dbSNP:rs771364038." evidence="17 24">
    <original>V</original>
    <variation>M</variation>
    <location>
        <position position="236"/>
    </location>
</feature>
<feature type="sequence variant" id="VAR_089110" description="In HMNR10; uncertain significance." evidence="23">
    <original>W</original>
    <variation>L</variation>
    <location>
        <position position="254"/>
    </location>
</feature>
<feature type="sequence variant" id="VAR_089111" description="Found in patients with hereditary spastic paraplegia; likely pathogenic; severely reduced kinase activity resulting in severely decreased phosphorylation of COIL, H3, H2AX, TP53, TP53BP1 and ATF2; the orthologous mouse mutation results in impaired Cajal bodies assembly; loss of function in DNA damage response; dbSNP:rs1428656431." evidence="30">
    <original>D</original>
    <variation>G</variation>
    <location>
        <position position="263"/>
    </location>
</feature>
<feature type="sequence variant" id="VAR_089112" description="In HMNR10; likely pathogenic; severely reduced kinase activity resulting in severely decreased autophosphorylation and phosphorylation of COIL, H3, H2AX, TP53, JUN and TP53BP1; reduced protein stability; dbSNP:rs772731615." evidence="19 24">
    <original>R</original>
    <variation>C</variation>
    <location>
        <position position="321"/>
    </location>
</feature>
<feature type="sequence variant" id="VAR_089113" description="In PCH1A and HMNR10; pathogenic; mutant transcripts undergo nonsense-mediated decay; severely reduced protein abundance detected by Western blot in homozygous patient cells; reduced kinase activity; severely decreased autophosphorylation and phosphorylation of COIL, H3, H2AX, TP53, JUN and TP53BP1; does not localize to Cajal bodies; reduced protein stability; dbSNP:rs137853063." evidence="13 15 17 20 24">
    <location>
        <begin position="358"/>
        <end position="396"/>
    </location>
</feature>
<feature type="sequence variant" id="VAR_089114" description="In HMNR10; likely pathogenic; decreased histone H3 phosphorylation; abolishes interaction with nucleosome; does not localizes to chromatin during mitosis; dbSNP:rs184887106." evidence="21 22 26 31">
    <location>
        <begin position="375"/>
        <end position="396"/>
    </location>
</feature>
<feature type="sequence variant" id="VAR_089115" description="In HMNR10; likely pathogenic; severely decreased interaction with nucleosome; dbSNP:rs1420939606." evidence="25 26 31">
    <original>R</original>
    <variation>H</variation>
    <location>
        <position position="387"/>
    </location>
</feature>
<feature type="mutagenesis site" description="Does not abolish autophosphorylation." evidence="5">
    <original>S</original>
    <variation>A</variation>
    <location>
        <position position="14"/>
    </location>
</feature>
<feature type="mutagenesis site" description="Does not abolish autophosphorylation." evidence="5">
    <original>T</original>
    <variation>A</variation>
    <location>
        <position position="102"/>
    </location>
</feature>
<feature type="mutagenesis site" description="Does not abolish autophosphorylation." evidence="5">
    <original>S</original>
    <variation>A</variation>
    <location>
        <position position="125"/>
    </location>
</feature>
<feature type="mutagenesis site" description="Does not abolish autophosphorylation." evidence="5">
    <original>S</original>
    <variation>A</variation>
    <location>
        <position position="150"/>
    </location>
</feature>
<feature type="mutagenesis site" description="Does not abolish autophosphorylation." evidence="5">
    <original>S</original>
    <variation>A</variation>
    <location>
        <position position="158"/>
    </location>
</feature>
<feature type="mutagenesis site" description="Does not affect phosphorylation at S-342." evidence="12">
    <original>K</original>
    <variation>A</variation>
    <location>
        <position position="179"/>
    </location>
</feature>
<feature type="mutagenesis site" description="Loss of kinase activity. Unable to phosphorylate COIL, H3, H2AX, TP53, TP53BP1 and ATF2." evidence="27 30">
    <original>K</original>
    <variation>E</variation>
    <location>
        <position position="179"/>
    </location>
</feature>
<feature type="mutagenesis site" description="Does not abolish autophosphorylation." evidence="5">
    <original>S</original>
    <variation>A</variation>
    <location>
        <position position="239"/>
    </location>
</feature>
<feature type="mutagenesis site" description="Does not abolish autophosphorylation." evidence="5">
    <original>T</original>
    <variation>A</variation>
    <location>
        <position position="305"/>
    </location>
</feature>
<feature type="mutagenesis site" description="Does not abolish autophosphorylation." evidence="5">
    <original>T</original>
    <variation>A</variation>
    <location>
        <position position="312"/>
    </location>
</feature>
<feature type="mutagenesis site" description="Abolishes phosphorylation by PLK3 and induction of Golgi fragmentation during mitosis. Strongly reduced autophosphorylation." evidence="12 14">
    <original>S</original>
    <variation>A</variation>
    <location>
        <position position="342"/>
    </location>
</feature>
<feature type="mutagenesis site" description="Strongly reduced autophosphorylation." evidence="14">
    <original>T</original>
    <variation>A</variation>
    <location>
        <position position="353"/>
    </location>
</feature>
<feature type="mutagenesis site" description="Does not abolish autophosphorylation." evidence="5">
    <original>T</original>
    <variation>A</variation>
    <location>
        <position position="355"/>
    </location>
</feature>
<feature type="mutagenesis site" description="Abolishes interaction with nucleosome. Decreased histone H3 phosphorylation." evidence="31">
    <original>RSRTRKR</original>
    <variation>ASATAKA</variation>
    <location>
        <begin position="387"/>
        <end position="393"/>
    </location>
</feature>
<feature type="mutagenesis site" description="Does not abolish autophosphorylation." evidence="5">
    <original>T</original>
    <variation>A</variation>
    <location>
        <position position="390"/>
    </location>
</feature>
<feature type="turn" evidence="43">
    <location>
        <begin position="2"/>
        <end position="4"/>
    </location>
</feature>
<feature type="strand" evidence="43">
    <location>
        <begin position="11"/>
        <end position="13"/>
    </location>
</feature>
<feature type="strand" evidence="42">
    <location>
        <begin position="22"/>
        <end position="24"/>
    </location>
</feature>
<feature type="strand" evidence="45">
    <location>
        <begin position="28"/>
        <end position="30"/>
    </location>
</feature>
<feature type="strand" evidence="45">
    <location>
        <begin position="36"/>
        <end position="42"/>
    </location>
</feature>
<feature type="strand" evidence="45">
    <location>
        <begin position="45"/>
        <end position="47"/>
    </location>
</feature>
<feature type="strand" evidence="45">
    <location>
        <begin position="51"/>
        <end position="56"/>
    </location>
</feature>
<feature type="strand" evidence="46">
    <location>
        <begin position="58"/>
        <end position="60"/>
    </location>
</feature>
<feature type="strand" evidence="45">
    <location>
        <begin position="67"/>
        <end position="74"/>
    </location>
</feature>
<feature type="helix" evidence="45">
    <location>
        <begin position="78"/>
        <end position="90"/>
    </location>
</feature>
<feature type="helix" evidence="45">
    <location>
        <begin position="93"/>
        <end position="102"/>
    </location>
</feature>
<feature type="strand" evidence="45">
    <location>
        <begin position="113"/>
        <end position="121"/>
    </location>
</feature>
<feature type="strand" evidence="45">
    <location>
        <begin position="124"/>
        <end position="132"/>
    </location>
</feature>
<feature type="strand" evidence="45">
    <location>
        <begin position="134"/>
        <end position="137"/>
    </location>
</feature>
<feature type="helix" evidence="45">
    <location>
        <begin position="138"/>
        <end position="144"/>
    </location>
</feature>
<feature type="turn" evidence="47">
    <location>
        <begin position="145"/>
        <end position="147"/>
    </location>
</feature>
<feature type="helix" evidence="45">
    <location>
        <begin position="151"/>
        <end position="170"/>
    </location>
</feature>
<feature type="helix" evidence="45">
    <location>
        <begin position="180"/>
        <end position="182"/>
    </location>
</feature>
<feature type="strand" evidence="45">
    <location>
        <begin position="183"/>
        <end position="188"/>
    </location>
</feature>
<feature type="strand" evidence="45">
    <location>
        <begin position="193"/>
        <end position="195"/>
    </location>
</feature>
<feature type="helix" evidence="48">
    <location>
        <begin position="198"/>
        <end position="200"/>
    </location>
</feature>
<feature type="strand" evidence="45">
    <location>
        <begin position="202"/>
        <end position="205"/>
    </location>
</feature>
<feature type="helix" evidence="45">
    <location>
        <begin position="206"/>
        <end position="208"/>
    </location>
</feature>
<feature type="turn" evidence="45">
    <location>
        <begin position="225"/>
        <end position="227"/>
    </location>
</feature>
<feature type="helix" evidence="45">
    <location>
        <begin position="230"/>
        <end position="233"/>
    </location>
</feature>
<feature type="helix" evidence="45">
    <location>
        <begin position="240"/>
        <end position="256"/>
    </location>
</feature>
<feature type="turn" evidence="45">
    <location>
        <begin position="260"/>
        <end position="263"/>
    </location>
</feature>
<feature type="helix" evidence="45">
    <location>
        <begin position="268"/>
        <end position="280"/>
    </location>
</feature>
<feature type="helix" evidence="45">
    <location>
        <begin position="282"/>
        <end position="289"/>
    </location>
</feature>
<feature type="helix" evidence="44">
    <location>
        <begin position="291"/>
        <end position="293"/>
    </location>
</feature>
<feature type="helix" evidence="45">
    <location>
        <begin position="297"/>
        <end position="307"/>
    </location>
</feature>
<feature type="strand" evidence="41">
    <location>
        <begin position="311"/>
        <end position="313"/>
    </location>
</feature>
<feature type="helix" evidence="45">
    <location>
        <begin position="317"/>
        <end position="330"/>
    </location>
</feature>
<feature type="strand" evidence="41">
    <location>
        <begin position="355"/>
        <end position="357"/>
    </location>
</feature>
<keyword id="KW-0002">3D-structure</keyword>
<keyword id="KW-0067">ATP-binding</keyword>
<keyword id="KW-0131">Cell cycle</keyword>
<keyword id="KW-0132">Cell division</keyword>
<keyword id="KW-0963">Cytoplasm</keyword>
<keyword id="KW-0225">Disease variant</keyword>
<keyword id="KW-0945">Host-virus interaction</keyword>
<keyword id="KW-1017">Isopeptide bond</keyword>
<keyword id="KW-0418">Kinase</keyword>
<keyword id="KW-0498">Mitosis</keyword>
<keyword id="KW-0523">Neurodegeneration</keyword>
<keyword id="KW-0622">Neuropathy</keyword>
<keyword id="KW-0547">Nucleotide-binding</keyword>
<keyword id="KW-0539">Nucleus</keyword>
<keyword id="KW-0597">Phosphoprotein</keyword>
<keyword id="KW-1267">Proteomics identification</keyword>
<keyword id="KW-1185">Reference proteome</keyword>
<keyword id="KW-0723">Serine/threonine-protein kinase</keyword>
<keyword id="KW-0808">Transferase</keyword>
<keyword id="KW-0832">Ubl conjugation</keyword>
<dbReference type="EC" id="2.7.11.1" evidence="14"/>
<dbReference type="EMBL" id="AB000449">
    <property type="protein sequence ID" value="BAA19108.1"/>
    <property type="molecule type" value="mRNA"/>
</dbReference>
<dbReference type="EMBL" id="BC103761">
    <property type="protein sequence ID" value="AAI03762.1"/>
    <property type="molecule type" value="mRNA"/>
</dbReference>
<dbReference type="EMBL" id="BC112075">
    <property type="protein sequence ID" value="AAI12076.1"/>
    <property type="molecule type" value="mRNA"/>
</dbReference>
<dbReference type="EMBL" id="BC113510">
    <property type="protein sequence ID" value="AAI13511.1"/>
    <property type="molecule type" value="mRNA"/>
</dbReference>
<dbReference type="CCDS" id="CCDS9947.1"/>
<dbReference type="RefSeq" id="NP_003375.1">
    <property type="nucleotide sequence ID" value="NM_003384.3"/>
</dbReference>
<dbReference type="PDB" id="2KTY">
    <property type="method" value="NMR"/>
    <property type="chains" value="A=1-360"/>
</dbReference>
<dbReference type="PDB" id="2KUL">
    <property type="method" value="NMR"/>
    <property type="chains" value="A=1-360"/>
</dbReference>
<dbReference type="PDB" id="2LAV">
    <property type="method" value="NMR"/>
    <property type="chains" value="A=1-361"/>
</dbReference>
<dbReference type="PDB" id="2RSV">
    <property type="method" value="NMR"/>
    <property type="chains" value="A=1-396"/>
</dbReference>
<dbReference type="PDB" id="3OP5">
    <property type="method" value="X-ray"/>
    <property type="resolution" value="2.40 A"/>
    <property type="chains" value="A/B/C/D=3-364"/>
</dbReference>
<dbReference type="PDB" id="5UKF">
    <property type="method" value="X-ray"/>
    <property type="resolution" value="2.40 A"/>
    <property type="chains" value="A/B/C/D=3-364"/>
</dbReference>
<dbReference type="PDB" id="5UVF">
    <property type="method" value="X-ray"/>
    <property type="resolution" value="2.00 A"/>
    <property type="chains" value="A/B/C/D=3-364"/>
</dbReference>
<dbReference type="PDB" id="6AC9">
    <property type="method" value="X-ray"/>
    <property type="resolution" value="2.07 A"/>
    <property type="chains" value="A/B/C/D=1-364"/>
</dbReference>
<dbReference type="PDB" id="6BP0">
    <property type="method" value="X-ray"/>
    <property type="resolution" value="1.90 A"/>
    <property type="chains" value="A/B/C/D=3-364"/>
</dbReference>
<dbReference type="PDB" id="6BRU">
    <property type="method" value="X-ray"/>
    <property type="resolution" value="1.80 A"/>
    <property type="chains" value="A/B/C/D=3-364"/>
</dbReference>
<dbReference type="PDB" id="6BTW">
    <property type="method" value="X-ray"/>
    <property type="resolution" value="1.90 A"/>
    <property type="chains" value="A/B/C/D=3-364"/>
</dbReference>
<dbReference type="PDB" id="6BU6">
    <property type="method" value="X-ray"/>
    <property type="resolution" value="1.80 A"/>
    <property type="chains" value="A/B/C/D=3-364"/>
</dbReference>
<dbReference type="PDB" id="6CFM">
    <property type="method" value="X-ray"/>
    <property type="resolution" value="2.45 A"/>
    <property type="chains" value="A/B/C/D=3-364"/>
</dbReference>
<dbReference type="PDB" id="6CMM">
    <property type="method" value="X-ray"/>
    <property type="resolution" value="2.10 A"/>
    <property type="chains" value="A/B/C/D=3-364"/>
</dbReference>
<dbReference type="PDB" id="6CNX">
    <property type="method" value="X-ray"/>
    <property type="resolution" value="2.00 A"/>
    <property type="chains" value="A/B/C/D=3-364"/>
</dbReference>
<dbReference type="PDB" id="6CQH">
    <property type="method" value="X-ray"/>
    <property type="resolution" value="2.15 A"/>
    <property type="chains" value="A/B/C/D=3-364"/>
</dbReference>
<dbReference type="PDB" id="6CSW">
    <property type="method" value="X-ray"/>
    <property type="resolution" value="2.25 A"/>
    <property type="chains" value="A/B/C/D=3-364"/>
</dbReference>
<dbReference type="PDB" id="6DD4">
    <property type="method" value="X-ray"/>
    <property type="resolution" value="2.10 A"/>
    <property type="chains" value="A/B/C/D=3-364"/>
</dbReference>
<dbReference type="PDB" id="6NPN">
    <property type="method" value="X-ray"/>
    <property type="resolution" value="2.20 A"/>
    <property type="chains" value="A/B/C/D=3-364"/>
</dbReference>
<dbReference type="PDB" id="6VXU">
    <property type="method" value="X-ray"/>
    <property type="resolution" value="2.00 A"/>
    <property type="chains" value="A/B/C/D=3-364"/>
</dbReference>
<dbReference type="PDB" id="6VZH">
    <property type="method" value="X-ray"/>
    <property type="resolution" value="2.55 A"/>
    <property type="chains" value="A/B/C/D=3-364"/>
</dbReference>
<dbReference type="PDB" id="7M10">
    <property type="method" value="X-ray"/>
    <property type="resolution" value="1.15 A"/>
    <property type="chains" value="B=2-13"/>
</dbReference>
<dbReference type="PDB" id="7TAN">
    <property type="method" value="EM"/>
    <property type="resolution" value="3.00 A"/>
    <property type="chains" value="K/L=1-396"/>
</dbReference>
<dbReference type="PDB" id="8F8Y">
    <property type="method" value="X-ray"/>
    <property type="resolution" value="3.06 A"/>
    <property type="chains" value="E/F=2-13"/>
</dbReference>
<dbReference type="PDB" id="8V42">
    <property type="method" value="X-ray"/>
    <property type="resolution" value="2.30 A"/>
    <property type="chains" value="A/B/C/D=3-364"/>
</dbReference>
<dbReference type="PDBsum" id="2KTY"/>
<dbReference type="PDBsum" id="2KUL"/>
<dbReference type="PDBsum" id="2LAV"/>
<dbReference type="PDBsum" id="2RSV"/>
<dbReference type="PDBsum" id="3OP5"/>
<dbReference type="PDBsum" id="5UKF"/>
<dbReference type="PDBsum" id="5UVF"/>
<dbReference type="PDBsum" id="6AC9"/>
<dbReference type="PDBsum" id="6BP0"/>
<dbReference type="PDBsum" id="6BRU"/>
<dbReference type="PDBsum" id="6BTW"/>
<dbReference type="PDBsum" id="6BU6"/>
<dbReference type="PDBsum" id="6CFM"/>
<dbReference type="PDBsum" id="6CMM"/>
<dbReference type="PDBsum" id="6CNX"/>
<dbReference type="PDBsum" id="6CQH"/>
<dbReference type="PDBsum" id="6CSW"/>
<dbReference type="PDBsum" id="6DD4"/>
<dbReference type="PDBsum" id="6NPN"/>
<dbReference type="PDBsum" id="6VXU"/>
<dbReference type="PDBsum" id="6VZH"/>
<dbReference type="PDBsum" id="7M10"/>
<dbReference type="PDBsum" id="7TAN"/>
<dbReference type="PDBsum" id="8F8Y"/>
<dbReference type="PDBsum" id="8V42"/>
<dbReference type="BMRB" id="Q99986"/>
<dbReference type="EMDB" id="EMD-25777"/>
<dbReference type="SMR" id="Q99986"/>
<dbReference type="BioGRID" id="113282">
    <property type="interactions" value="299"/>
</dbReference>
<dbReference type="CORUM" id="Q99986"/>
<dbReference type="FunCoup" id="Q99986">
    <property type="interactions" value="4829"/>
</dbReference>
<dbReference type="IntAct" id="Q99986">
    <property type="interactions" value="103"/>
</dbReference>
<dbReference type="MINT" id="Q99986"/>
<dbReference type="STRING" id="9606.ENSP00000216639"/>
<dbReference type="BindingDB" id="Q99986"/>
<dbReference type="ChEMBL" id="CHEMBL1293199"/>
<dbReference type="GlyGen" id="Q99986">
    <property type="glycosylation" value="1 site, 1 O-linked glycan (1 site)"/>
</dbReference>
<dbReference type="iPTMnet" id="Q99986"/>
<dbReference type="PhosphoSitePlus" id="Q99986"/>
<dbReference type="SwissPalm" id="Q99986"/>
<dbReference type="BioMuta" id="VRK1"/>
<dbReference type="DMDM" id="45593726"/>
<dbReference type="jPOST" id="Q99986"/>
<dbReference type="MassIVE" id="Q99986"/>
<dbReference type="PaxDb" id="9606-ENSP00000216639"/>
<dbReference type="PeptideAtlas" id="Q99986"/>
<dbReference type="ProteomicsDB" id="78563"/>
<dbReference type="Pumba" id="Q99986"/>
<dbReference type="Antibodypedia" id="42">
    <property type="antibodies" value="278 antibodies from 36 providers"/>
</dbReference>
<dbReference type="DNASU" id="7443"/>
<dbReference type="Ensembl" id="ENST00000216639.8">
    <property type="protein sequence ID" value="ENSP00000216639.3"/>
    <property type="gene ID" value="ENSG00000100749.9"/>
</dbReference>
<dbReference type="Ensembl" id="ENST00000679816.1">
    <property type="protein sequence ID" value="ENSP00000506525.1"/>
    <property type="gene ID" value="ENSG00000100749.9"/>
</dbReference>
<dbReference type="Ensembl" id="ENST00000680756.1">
    <property type="protein sequence ID" value="ENSP00000506648.1"/>
    <property type="gene ID" value="ENSG00000100749.9"/>
</dbReference>
<dbReference type="Ensembl" id="ENST00000681344.1">
    <property type="protein sequence ID" value="ENSP00000506151.1"/>
    <property type="gene ID" value="ENSG00000100749.9"/>
</dbReference>
<dbReference type="Ensembl" id="ENST00000681355.1">
    <property type="protein sequence ID" value="ENSP00000506214.1"/>
    <property type="gene ID" value="ENSG00000100749.9"/>
</dbReference>
<dbReference type="GeneID" id="7443"/>
<dbReference type="KEGG" id="hsa:7443"/>
<dbReference type="MANE-Select" id="ENST00000216639.8">
    <property type="protein sequence ID" value="ENSP00000216639.3"/>
    <property type="RefSeq nucleotide sequence ID" value="NM_003384.3"/>
    <property type="RefSeq protein sequence ID" value="NP_003375.1"/>
</dbReference>
<dbReference type="UCSC" id="uc001yft.4">
    <property type="organism name" value="human"/>
</dbReference>
<dbReference type="AGR" id="HGNC:12718"/>
<dbReference type="CTD" id="7443"/>
<dbReference type="DisGeNET" id="7443"/>
<dbReference type="GeneCards" id="VRK1"/>
<dbReference type="HGNC" id="HGNC:12718">
    <property type="gene designation" value="VRK1"/>
</dbReference>
<dbReference type="HPA" id="ENSG00000100749">
    <property type="expression patterns" value="Tissue enhanced (bone marrow, testis)"/>
</dbReference>
<dbReference type="MalaCards" id="VRK1"/>
<dbReference type="MIM" id="602168">
    <property type="type" value="gene"/>
</dbReference>
<dbReference type="MIM" id="607596">
    <property type="type" value="phenotype"/>
</dbReference>
<dbReference type="MIM" id="620542">
    <property type="type" value="phenotype"/>
</dbReference>
<dbReference type="neXtProt" id="NX_Q99986"/>
<dbReference type="OpenTargets" id="ENSG00000100749"/>
<dbReference type="Orphanet" id="423894">
    <property type="disease" value="Microcephaly-complex motor and sensory axonal neuropathy syndrome"/>
</dbReference>
<dbReference type="Orphanet" id="2254">
    <property type="disease" value="Pontocerebellar hypoplasia type 1"/>
</dbReference>
<dbReference type="PharmGKB" id="PA37330"/>
<dbReference type="VEuPathDB" id="HostDB:ENSG00000100749"/>
<dbReference type="eggNOG" id="KOG1164">
    <property type="taxonomic scope" value="Eukaryota"/>
</dbReference>
<dbReference type="GeneTree" id="ENSGT00940000155554"/>
<dbReference type="HOGENOM" id="CLU_019279_4_0_1"/>
<dbReference type="InParanoid" id="Q99986"/>
<dbReference type="OMA" id="RETHDTH"/>
<dbReference type="OrthoDB" id="2687620at2759"/>
<dbReference type="PAN-GO" id="Q99986">
    <property type="GO annotations" value="6 GO annotations based on evolutionary models"/>
</dbReference>
<dbReference type="PhylomeDB" id="Q99986"/>
<dbReference type="TreeFam" id="TF106473"/>
<dbReference type="PathwayCommons" id="Q99986"/>
<dbReference type="Reactome" id="R-HSA-2980766">
    <property type="pathway name" value="Nuclear Envelope Breakdown"/>
</dbReference>
<dbReference type="Reactome" id="R-HSA-2995383">
    <property type="pathway name" value="Initiation of Nuclear Envelope (NE) Reformation"/>
</dbReference>
<dbReference type="SignaLink" id="Q99986"/>
<dbReference type="SIGNOR" id="Q99986"/>
<dbReference type="BioGRID-ORCS" id="7443">
    <property type="hits" value="460 hits in 1208 CRISPR screens"/>
</dbReference>
<dbReference type="CD-CODE" id="6F24707C">
    <property type="entry name" value="Cajal body"/>
</dbReference>
<dbReference type="CD-CODE" id="91857CE7">
    <property type="entry name" value="Nucleolus"/>
</dbReference>
<dbReference type="ChiTaRS" id="VRK1">
    <property type="organism name" value="human"/>
</dbReference>
<dbReference type="EvolutionaryTrace" id="Q99986"/>
<dbReference type="GeneWiki" id="VRK1"/>
<dbReference type="GenomeRNAi" id="7443"/>
<dbReference type="Pharos" id="Q99986">
    <property type="development level" value="Tbio"/>
</dbReference>
<dbReference type="PRO" id="PR:Q99986"/>
<dbReference type="Proteomes" id="UP000005640">
    <property type="component" value="Chromosome 14"/>
</dbReference>
<dbReference type="RNAct" id="Q99986">
    <property type="molecule type" value="protein"/>
</dbReference>
<dbReference type="Bgee" id="ENSG00000100749">
    <property type="expression patterns" value="Expressed in oocyte and 197 other cell types or tissues"/>
</dbReference>
<dbReference type="ExpressionAtlas" id="Q99986">
    <property type="expression patterns" value="baseline and differential"/>
</dbReference>
<dbReference type="GO" id="GO:0015030">
    <property type="term" value="C:Cajal body"/>
    <property type="evidence" value="ECO:0000314"/>
    <property type="project" value="UniProtKB"/>
</dbReference>
<dbReference type="GO" id="GO:0000785">
    <property type="term" value="C:chromatin"/>
    <property type="evidence" value="ECO:0000314"/>
    <property type="project" value="UniProtKB"/>
</dbReference>
<dbReference type="GO" id="GO:0005737">
    <property type="term" value="C:cytoplasm"/>
    <property type="evidence" value="ECO:0000318"/>
    <property type="project" value="GO_Central"/>
</dbReference>
<dbReference type="GO" id="GO:0005829">
    <property type="term" value="C:cytosol"/>
    <property type="evidence" value="ECO:0000314"/>
    <property type="project" value="HPA"/>
</dbReference>
<dbReference type="GO" id="GO:0005795">
    <property type="term" value="C:Golgi stack"/>
    <property type="evidence" value="ECO:0000314"/>
    <property type="project" value="UniProtKB"/>
</dbReference>
<dbReference type="GO" id="GO:0005730">
    <property type="term" value="C:nucleolus"/>
    <property type="evidence" value="ECO:0000314"/>
    <property type="project" value="HPA"/>
</dbReference>
<dbReference type="GO" id="GO:0005654">
    <property type="term" value="C:nucleoplasm"/>
    <property type="evidence" value="ECO:0000314"/>
    <property type="project" value="HPA"/>
</dbReference>
<dbReference type="GO" id="GO:0005634">
    <property type="term" value="C:nucleus"/>
    <property type="evidence" value="ECO:0000314"/>
    <property type="project" value="UniProtKB"/>
</dbReference>
<dbReference type="GO" id="GO:0005524">
    <property type="term" value="F:ATP binding"/>
    <property type="evidence" value="ECO:0007669"/>
    <property type="project" value="UniProtKB-KW"/>
</dbReference>
<dbReference type="GO" id="GO:0042393">
    <property type="term" value="F:histone binding"/>
    <property type="evidence" value="ECO:0000353"/>
    <property type="project" value="UniProtKB"/>
</dbReference>
<dbReference type="GO" id="GO:0141003">
    <property type="term" value="F:histone H2AX kinase activity"/>
    <property type="evidence" value="ECO:0000314"/>
    <property type="project" value="UniProtKB"/>
</dbReference>
<dbReference type="GO" id="GO:0035175">
    <property type="term" value="F:histone H3S10 kinase activity"/>
    <property type="evidence" value="ECO:0000314"/>
    <property type="project" value="UniProtKB"/>
</dbReference>
<dbReference type="GO" id="GO:0072354">
    <property type="term" value="F:histone H3T3 kinase activity"/>
    <property type="evidence" value="ECO:0000314"/>
    <property type="project" value="UniProtKB"/>
</dbReference>
<dbReference type="GO" id="GO:0016301">
    <property type="term" value="F:kinase activity"/>
    <property type="evidence" value="ECO:0000314"/>
    <property type="project" value="DisProt"/>
</dbReference>
<dbReference type="GO" id="GO:0031492">
    <property type="term" value="F:nucleosomal DNA binding"/>
    <property type="evidence" value="ECO:0000314"/>
    <property type="project" value="UniProtKB"/>
</dbReference>
<dbReference type="GO" id="GO:0004672">
    <property type="term" value="F:protein kinase activity"/>
    <property type="evidence" value="ECO:0000314"/>
    <property type="project" value="UniProtKB"/>
</dbReference>
<dbReference type="GO" id="GO:0019901">
    <property type="term" value="F:protein kinase binding"/>
    <property type="evidence" value="ECO:0000314"/>
    <property type="project" value="MGI"/>
</dbReference>
<dbReference type="GO" id="GO:0106310">
    <property type="term" value="F:protein serine kinase activity"/>
    <property type="evidence" value="ECO:0007669"/>
    <property type="project" value="RHEA"/>
</dbReference>
<dbReference type="GO" id="GO:0004674">
    <property type="term" value="F:protein serine/threonine kinase activity"/>
    <property type="evidence" value="ECO:0000314"/>
    <property type="project" value="UniProtKB"/>
</dbReference>
<dbReference type="GO" id="GO:0030576">
    <property type="term" value="P:Cajal body organization"/>
    <property type="evidence" value="ECO:0000315"/>
    <property type="project" value="UniProtKB"/>
</dbReference>
<dbReference type="GO" id="GO:0051301">
    <property type="term" value="P:cell division"/>
    <property type="evidence" value="ECO:0007669"/>
    <property type="project" value="UniProtKB-KW"/>
</dbReference>
<dbReference type="GO" id="GO:0006338">
    <property type="term" value="P:chromatin remodeling"/>
    <property type="evidence" value="ECO:0000315"/>
    <property type="project" value="UniProtKB"/>
</dbReference>
<dbReference type="GO" id="GO:0006974">
    <property type="term" value="P:DNA damage response"/>
    <property type="evidence" value="ECO:0000314"/>
    <property type="project" value="UniProtKB"/>
</dbReference>
<dbReference type="GO" id="GO:0090166">
    <property type="term" value="P:Golgi disassembly"/>
    <property type="evidence" value="ECO:0000314"/>
    <property type="project" value="UniProtKB"/>
</dbReference>
<dbReference type="GO" id="GO:0007077">
    <property type="term" value="P:mitotic nuclear membrane disassembly"/>
    <property type="evidence" value="ECO:0000304"/>
    <property type="project" value="Reactome"/>
</dbReference>
<dbReference type="GO" id="GO:0031175">
    <property type="term" value="P:neuron projection development"/>
    <property type="evidence" value="ECO:0000315"/>
    <property type="project" value="UniProtKB"/>
</dbReference>
<dbReference type="GO" id="GO:0120187">
    <property type="term" value="P:positive regulation of protein localization to chromatin"/>
    <property type="evidence" value="ECO:0000314"/>
    <property type="project" value="UniProtKB"/>
</dbReference>
<dbReference type="GO" id="GO:0046777">
    <property type="term" value="P:protein autophosphorylation"/>
    <property type="evidence" value="ECO:0000314"/>
    <property type="project" value="UniProtKB"/>
</dbReference>
<dbReference type="GO" id="GO:0006468">
    <property type="term" value="P:protein phosphorylation"/>
    <property type="evidence" value="ECO:0000304"/>
    <property type="project" value="ProtInc"/>
</dbReference>
<dbReference type="GO" id="GO:2001222">
    <property type="term" value="P:regulation of neuron migration"/>
    <property type="evidence" value="ECO:0000250"/>
    <property type="project" value="UniProtKB"/>
</dbReference>
<dbReference type="GO" id="GO:0007165">
    <property type="term" value="P:signal transduction"/>
    <property type="evidence" value="ECO:0000318"/>
    <property type="project" value="GO_Central"/>
</dbReference>
<dbReference type="CDD" id="cd14122">
    <property type="entry name" value="STKc_VRK1"/>
    <property type="match status" value="1"/>
</dbReference>
<dbReference type="FunFam" id="1.10.510.10:FF:000348">
    <property type="entry name" value="serine/threonine-protein kinase VRK1 isoform X1"/>
    <property type="match status" value="1"/>
</dbReference>
<dbReference type="Gene3D" id="1.10.510.10">
    <property type="entry name" value="Transferase(Phosphotransferase) domain 1"/>
    <property type="match status" value="1"/>
</dbReference>
<dbReference type="InterPro" id="IPR050235">
    <property type="entry name" value="CK1_Ser-Thr_kinase"/>
</dbReference>
<dbReference type="InterPro" id="IPR011009">
    <property type="entry name" value="Kinase-like_dom_sf"/>
</dbReference>
<dbReference type="InterPro" id="IPR000719">
    <property type="entry name" value="Prot_kinase_dom"/>
</dbReference>
<dbReference type="InterPro" id="IPR017441">
    <property type="entry name" value="Protein_kinase_ATP_BS"/>
</dbReference>
<dbReference type="InterPro" id="IPR008271">
    <property type="entry name" value="Ser/Thr_kinase_AS"/>
</dbReference>
<dbReference type="PANTHER" id="PTHR11909">
    <property type="entry name" value="CASEIN KINASE-RELATED"/>
    <property type="match status" value="1"/>
</dbReference>
<dbReference type="Pfam" id="PF00069">
    <property type="entry name" value="Pkinase"/>
    <property type="match status" value="1"/>
</dbReference>
<dbReference type="SMART" id="SM00220">
    <property type="entry name" value="S_TKc"/>
    <property type="match status" value="1"/>
</dbReference>
<dbReference type="SUPFAM" id="SSF56112">
    <property type="entry name" value="Protein kinase-like (PK-like)"/>
    <property type="match status" value="1"/>
</dbReference>
<dbReference type="PROSITE" id="PS00107">
    <property type="entry name" value="PROTEIN_KINASE_ATP"/>
    <property type="match status" value="1"/>
</dbReference>
<dbReference type="PROSITE" id="PS50011">
    <property type="entry name" value="PROTEIN_KINASE_DOM"/>
    <property type="match status" value="1"/>
</dbReference>
<dbReference type="PROSITE" id="PS00108">
    <property type="entry name" value="PROTEIN_KINASE_ST"/>
    <property type="match status" value="1"/>
</dbReference>